<feature type="chain" id="PRO_0000189564" description="Chondroitin sulfate N-acetylgalactosaminyltransferase 1">
    <location>
        <begin position="1"/>
        <end position="532"/>
    </location>
</feature>
<feature type="topological domain" description="Cytoplasmic" evidence="2">
    <location>
        <begin position="1"/>
        <end position="14"/>
    </location>
</feature>
<feature type="transmembrane region" description="Helical; Signal-anchor for type II membrane protein" evidence="2">
    <location>
        <begin position="15"/>
        <end position="35"/>
    </location>
</feature>
<feature type="topological domain" description="Lumenal" evidence="2">
    <location>
        <begin position="36"/>
        <end position="532"/>
    </location>
</feature>
<feature type="coiled-coil region" evidence="2">
    <location>
        <begin position="57"/>
        <end position="100"/>
    </location>
</feature>
<feature type="binding site" evidence="2">
    <location>
        <position position="360"/>
    </location>
    <ligand>
        <name>a divalent metal cation</name>
        <dbReference type="ChEBI" id="CHEBI:60240"/>
    </ligand>
</feature>
<feature type="binding site" evidence="2">
    <location>
        <position position="477"/>
    </location>
    <ligand>
        <name>a divalent metal cation</name>
        <dbReference type="ChEBI" id="CHEBI:60240"/>
    </ligand>
</feature>
<feature type="glycosylation site" description="N-linked (GlcNAc...) asparagine" evidence="2">
    <location>
        <position position="315"/>
    </location>
</feature>
<feature type="glycosylation site" description="N-linked (GlcNAc...) asparagine" evidence="2">
    <location>
        <position position="324"/>
    </location>
</feature>
<feature type="splice variant" id="VSP_012726" description="In isoform 2." evidence="14">
    <location>
        <begin position="1"/>
        <end position="257"/>
    </location>
</feature>
<feature type="splice variant" id="VSP_012727" description="In isoform 2." evidence="14">
    <original>MANTLINVIVPLAKRVDKFRQFMQN</original>
    <variation>MESYSVTQAGVQWHELCSLQPSPPR</variation>
    <location>
        <begin position="258"/>
        <end position="282"/>
    </location>
</feature>
<feature type="splice variant" id="VSP_012728" description="In isoform 3." evidence="15">
    <original>EMCIEQDGRVHLTVVYFGKEEINEVKGILENTSKAANFRNFTFIQLNGEFSRGKGLDVGARFWKGSNVLLFFCDVDIYFTSEFLNTCRLNTQPGKKVFYPVLFSQYNPGIIYGHHDAVPPLEQQLVIKKETGFWRDFGFGMTCQYRSDFINIGGFDLDIKGWGGEDVHLYRKYLHSNLIVVRTPVRGLFHLWHEKRCMDELTPEQYKMCMQSKAMNEASHGQLGMLVFRHEIEAHLRKQKQKTSSKKT</original>
    <variation>PADEVFRCVPLSP</variation>
    <location>
        <begin position="285"/>
        <end position="532"/>
    </location>
</feature>
<feature type="sequence variant" id="VAR_055647" description="In dbSNP:rs17128518.">
    <original>V</original>
    <variation>I</variation>
    <location>
        <position position="137"/>
    </location>
</feature>
<feature type="sequence variant" id="VAR_060391" description="In dbSNP:rs7017776." evidence="3 4 6 7 9">
    <original>S</original>
    <variation>N</variation>
    <location>
        <position position="193"/>
    </location>
</feature>
<feature type="sequence variant" id="VAR_078123" description="Found in a patient with neuropathy; uncertain significance; loss of GalNAc-transferase activity; no effect on protein expression; dbSNP:rs200092345." evidence="10">
    <original>H</original>
    <variation>R</variation>
    <location>
        <position position="234"/>
    </location>
</feature>
<feature type="sequence variant" id="VAR_084187" description="In SDJLABA; reduced GalNAc-transferase activity." evidence="13">
    <original>N</original>
    <variation>S</variation>
    <location>
        <position position="264"/>
    </location>
</feature>
<feature type="sequence variant" id="VAR_078124" description="In SDJLABA; loss of GalNAc-transferase activity; dbSNP:rs746391651." evidence="11">
    <original>P</original>
    <variation>R</variation>
    <location>
        <position position="384"/>
    </location>
</feature>
<feature type="sequence variant" id="VAR_084188" description="In SDJLABA; severely reduced GalNAc transferase activity." evidence="13">
    <original>D</original>
    <variation>Y</variation>
    <location>
        <position position="432"/>
    </location>
</feature>
<feature type="sequence variant" id="VAR_055648" description="In dbSNP:rs17128366.">
    <original>F</original>
    <variation>Y</variation>
    <location>
        <position position="473"/>
    </location>
</feature>
<feature type="sequence variant" id="VAR_078125" description="Found in a patient with neuropathy; uncertain significance; loss of GalNAc-transferase activity; no effect on protein expression; dbSNP:rs533235539." evidence="10">
    <original>M</original>
    <variation>R</variation>
    <location>
        <position position="509"/>
    </location>
</feature>
<feature type="sequence conflict" description="In Ref. 1; BAB85992 and 3; AAQ88806." evidence="16" ref="1 3">
    <original>G</original>
    <variation>S</variation>
    <location>
        <position position="246"/>
    </location>
</feature>
<feature type="sequence conflict" description="In Ref. 6; AAH60772." evidence="16" ref="6">
    <original>K</original>
    <variation>E</variation>
    <location>
        <position position="252"/>
    </location>
</feature>
<feature type="sequence conflict" description="In Ref. 4; BAA92093." evidence="16" ref="4">
    <original>I</original>
    <variation>V</variation>
    <location>
        <position position="312"/>
    </location>
</feature>
<sequence length="532" mass="61294">MMMVRRGLLAWISRVVVLLVLLCCAISVLYMLACTPKGDEEQLALPRANSPTGKEGYQAVLQEWEEQHRNYVSSLKRQIAQLKEELQERSEQLRNGQYQASDAAGLGLDRSPPEKTQADLLAFLHSQVDKAEVNAGVKLATEYAAVPFDSFTLQKVYQLETGLTRHPEEKPVRKDKRDELVEAIESALETLNSPAENSPNHRPYTASDFIEGIYRTERDKGTLYELTFKGDHKHEFKRLILFRPFGPIMKVKNEKLNMANTLINVIVPLAKRVDKFRQFMQNFREMCIEQDGRVHLTVVYFGKEEINEVKGILENTSKAANFRNFTFIQLNGEFSRGKGLDVGARFWKGSNVLLFFCDVDIYFTSEFLNTCRLNTQPGKKVFYPVLFSQYNPGIIYGHHDAVPPLEQQLVIKKETGFWRDFGFGMTCQYRSDFINIGGFDLDIKGWGGEDVHLYRKYLHSNLIVVRTPVRGLFHLWHEKRCMDELTPEQYKMCMQSKAMNEASHGQLGMLVFRHEIEAHLRKQKQKTSSKKT</sequence>
<protein>
    <recommendedName>
        <fullName evidence="16">Chondroitin sulfate N-acetylgalactosaminyltransferase 1</fullName>
        <shortName evidence="16">CsGalNAcT-1</shortName>
        <ecNumber evidence="10 11">2.4.1.174</ecNumber>
    </recommendedName>
    <alternativeName>
        <fullName>Chondroitin beta-1,4-N-acetylgalactosaminyltransferase 1</fullName>
        <shortName>Beta4GalNAcT-1</shortName>
    </alternativeName>
</protein>
<dbReference type="EC" id="2.4.1.174" evidence="10 11"/>
<dbReference type="EMBL" id="AB071403">
    <property type="protein sequence ID" value="BAB85992.1"/>
    <property type="molecule type" value="mRNA"/>
</dbReference>
<dbReference type="EMBL" id="AB081516">
    <property type="protein sequence ID" value="BAC16217.1"/>
    <property type="molecule type" value="mRNA"/>
</dbReference>
<dbReference type="EMBL" id="AY358441">
    <property type="protein sequence ID" value="AAQ88806.1"/>
    <property type="molecule type" value="mRNA"/>
</dbReference>
<dbReference type="EMBL" id="AK002126">
    <property type="protein sequence ID" value="BAA92093.1"/>
    <property type="molecule type" value="mRNA"/>
</dbReference>
<dbReference type="EMBL" id="AK314625">
    <property type="protein sequence ID" value="BAG37191.1"/>
    <property type="molecule type" value="mRNA"/>
</dbReference>
<dbReference type="EMBL" id="AC090541">
    <property type="status" value="NOT_ANNOTATED_CDS"/>
    <property type="molecule type" value="Genomic_DNA"/>
</dbReference>
<dbReference type="EMBL" id="AC090786">
    <property type="status" value="NOT_ANNOTATED_CDS"/>
    <property type="molecule type" value="Genomic_DNA"/>
</dbReference>
<dbReference type="EMBL" id="AC116376">
    <property type="status" value="NOT_ANNOTATED_CDS"/>
    <property type="molecule type" value="Genomic_DNA"/>
</dbReference>
<dbReference type="EMBL" id="BC060772">
    <property type="protein sequence ID" value="AAH60772.1"/>
    <property type="molecule type" value="mRNA"/>
</dbReference>
<dbReference type="EMBL" id="AL157483">
    <property type="protein sequence ID" value="CAB75673.1"/>
    <property type="molecule type" value="mRNA"/>
</dbReference>
<dbReference type="CCDS" id="CCDS6010.1">
    <molecule id="Q8TDX6-1"/>
</dbReference>
<dbReference type="PIR" id="T46919">
    <property type="entry name" value="T46919"/>
</dbReference>
<dbReference type="RefSeq" id="NP_001123990.1">
    <molecule id="Q8TDX6-1"/>
    <property type="nucleotide sequence ID" value="NM_001130518.2"/>
</dbReference>
<dbReference type="RefSeq" id="NP_001341404.1">
    <molecule id="Q8TDX6-1"/>
    <property type="nucleotide sequence ID" value="NM_001354475.2"/>
</dbReference>
<dbReference type="RefSeq" id="NP_001341405.1">
    <molecule id="Q8TDX6-1"/>
    <property type="nucleotide sequence ID" value="NM_001354476.2"/>
</dbReference>
<dbReference type="RefSeq" id="NP_001341406.1">
    <molecule id="Q8TDX6-1"/>
    <property type="nucleotide sequence ID" value="NM_001354477.2"/>
</dbReference>
<dbReference type="RefSeq" id="NP_001341409.1">
    <molecule id="Q8TDX6-1"/>
    <property type="nucleotide sequence ID" value="NM_001354480.2"/>
</dbReference>
<dbReference type="RefSeq" id="NP_001341410.1">
    <molecule id="Q8TDX6-1"/>
    <property type="nucleotide sequence ID" value="NM_001354481.2"/>
</dbReference>
<dbReference type="RefSeq" id="NP_001341412.1">
    <molecule id="Q8TDX6-1"/>
    <property type="nucleotide sequence ID" value="NM_001354483.2"/>
</dbReference>
<dbReference type="RefSeq" id="NP_001341413.1">
    <molecule id="Q8TDX6-1"/>
    <property type="nucleotide sequence ID" value="NM_001354484.2"/>
</dbReference>
<dbReference type="RefSeq" id="NP_001341414.1">
    <molecule id="Q8TDX6-1"/>
    <property type="nucleotide sequence ID" value="NM_001354485.2"/>
</dbReference>
<dbReference type="RefSeq" id="NP_001341416.1">
    <molecule id="Q8TDX6-1"/>
    <property type="nucleotide sequence ID" value="NM_001354487.2"/>
</dbReference>
<dbReference type="RefSeq" id="NP_001341417.1">
    <molecule id="Q8TDX6-1"/>
    <property type="nucleotide sequence ID" value="NM_001354488.2"/>
</dbReference>
<dbReference type="RefSeq" id="NP_001341418.1">
    <molecule id="Q8TDX6-1"/>
    <property type="nucleotide sequence ID" value="NM_001354489.2"/>
</dbReference>
<dbReference type="RefSeq" id="NP_001341419.1">
    <molecule id="Q8TDX6-1"/>
    <property type="nucleotide sequence ID" value="NM_001354490.2"/>
</dbReference>
<dbReference type="RefSeq" id="NP_001341420.1">
    <molecule id="Q8TDX6-1"/>
    <property type="nucleotide sequence ID" value="NM_001354491.2"/>
</dbReference>
<dbReference type="RefSeq" id="NP_001341421.1">
    <molecule id="Q8TDX6-1"/>
    <property type="nucleotide sequence ID" value="NM_001354492.2"/>
</dbReference>
<dbReference type="RefSeq" id="NP_001341423.1">
    <molecule id="Q8TDX6-1"/>
    <property type="nucleotide sequence ID" value="NM_001354494.2"/>
</dbReference>
<dbReference type="RefSeq" id="NP_001341424.1">
    <molecule id="Q8TDX6-1"/>
    <property type="nucleotide sequence ID" value="NM_001354495.2"/>
</dbReference>
<dbReference type="RefSeq" id="NP_001341425.1">
    <molecule id="Q8TDX6-1"/>
    <property type="nucleotide sequence ID" value="NM_001354496.2"/>
</dbReference>
<dbReference type="RefSeq" id="NP_001341426.1">
    <molecule id="Q8TDX6-1"/>
    <property type="nucleotide sequence ID" value="NM_001354497.2"/>
</dbReference>
<dbReference type="RefSeq" id="NP_001341427.1">
    <molecule id="Q8TDX6-1"/>
    <property type="nucleotide sequence ID" value="NM_001354498.2"/>
</dbReference>
<dbReference type="RefSeq" id="NP_001341428.1">
    <molecule id="Q8TDX6-1"/>
    <property type="nucleotide sequence ID" value="NM_001354499.2"/>
</dbReference>
<dbReference type="RefSeq" id="NP_060841.5">
    <molecule id="Q8TDX6-1"/>
    <property type="nucleotide sequence ID" value="NM_018371.4"/>
</dbReference>
<dbReference type="RefSeq" id="XP_006716421.1">
    <property type="nucleotide sequence ID" value="XM_006716358.2"/>
</dbReference>
<dbReference type="RefSeq" id="XP_006716422.1">
    <property type="nucleotide sequence ID" value="XM_006716359.2"/>
</dbReference>
<dbReference type="RefSeq" id="XP_006716423.1">
    <molecule id="Q8TDX6-1"/>
    <property type="nucleotide sequence ID" value="XM_006716360.4"/>
</dbReference>
<dbReference type="RefSeq" id="XP_006716424.1">
    <property type="nucleotide sequence ID" value="XM_006716361.2"/>
</dbReference>
<dbReference type="RefSeq" id="XP_006716425.1">
    <property type="nucleotide sequence ID" value="XM_006716362.2"/>
</dbReference>
<dbReference type="RefSeq" id="XP_006716426.1">
    <molecule id="Q8TDX6-1"/>
    <property type="nucleotide sequence ID" value="XM_006716363.1"/>
</dbReference>
<dbReference type="RefSeq" id="XP_006716427.1">
    <molecule id="Q8TDX6-1"/>
    <property type="nucleotide sequence ID" value="XM_006716364.4"/>
</dbReference>
<dbReference type="RefSeq" id="XP_011542880.1">
    <molecule id="Q8TDX6-1"/>
    <property type="nucleotide sequence ID" value="XM_011544578.3"/>
</dbReference>
<dbReference type="RefSeq" id="XP_011542881.1">
    <property type="nucleotide sequence ID" value="XM_011544579.1"/>
</dbReference>
<dbReference type="RefSeq" id="XP_011542882.1">
    <property type="nucleotide sequence ID" value="XM_011544580.1"/>
</dbReference>
<dbReference type="RefSeq" id="XP_011542884.1">
    <property type="nucleotide sequence ID" value="XM_011544582.1"/>
</dbReference>
<dbReference type="RefSeq" id="XP_011542885.1">
    <molecule id="Q8TDX6-1"/>
    <property type="nucleotide sequence ID" value="XM_011544583.2"/>
</dbReference>
<dbReference type="RefSeq" id="XP_011542886.1">
    <property type="nucleotide sequence ID" value="XM_011544584.1"/>
</dbReference>
<dbReference type="RefSeq" id="XP_016869112.1">
    <property type="nucleotide sequence ID" value="XM_017013623.1"/>
</dbReference>
<dbReference type="RefSeq" id="XP_016869113.1">
    <property type="nucleotide sequence ID" value="XM_017013624.1"/>
</dbReference>
<dbReference type="RefSeq" id="XP_016869114.1">
    <molecule id="Q8TDX6-1"/>
    <property type="nucleotide sequence ID" value="XM_017013625.2"/>
</dbReference>
<dbReference type="RefSeq" id="XP_016869115.1">
    <property type="nucleotide sequence ID" value="XM_017013626.1"/>
</dbReference>
<dbReference type="RefSeq" id="XP_016869116.1">
    <property type="nucleotide sequence ID" value="XM_017013627.1"/>
</dbReference>
<dbReference type="RefSeq" id="XP_016869117.1">
    <property type="nucleotide sequence ID" value="XM_017013628.1"/>
</dbReference>
<dbReference type="RefSeq" id="XP_016869118.1">
    <property type="nucleotide sequence ID" value="XM_017013629.1"/>
</dbReference>
<dbReference type="RefSeq" id="XP_016869119.1">
    <property type="nucleotide sequence ID" value="XM_017013630.1"/>
</dbReference>
<dbReference type="RefSeq" id="XP_016869120.1">
    <property type="nucleotide sequence ID" value="XM_017013631.1"/>
</dbReference>
<dbReference type="RefSeq" id="XP_016869121.1">
    <property type="nucleotide sequence ID" value="XM_017013632.1"/>
</dbReference>
<dbReference type="RefSeq" id="XP_016869122.1">
    <property type="nucleotide sequence ID" value="XM_017013633.1"/>
</dbReference>
<dbReference type="RefSeq" id="XP_016869123.1">
    <property type="nucleotide sequence ID" value="XM_017013634.1"/>
</dbReference>
<dbReference type="RefSeq" id="XP_016869124.1">
    <property type="nucleotide sequence ID" value="XM_017013635.1"/>
</dbReference>
<dbReference type="RefSeq" id="XP_016869125.1">
    <property type="nucleotide sequence ID" value="XM_017013636.1"/>
</dbReference>
<dbReference type="RefSeq" id="XP_016869126.1">
    <property type="nucleotide sequence ID" value="XM_017013637.1"/>
</dbReference>
<dbReference type="RefSeq" id="XP_016869127.1">
    <property type="nucleotide sequence ID" value="XM_017013638.1"/>
</dbReference>
<dbReference type="RefSeq" id="XP_024302958.1">
    <molecule id="Q8TDX6-1"/>
    <property type="nucleotide sequence ID" value="XM_024447190.1"/>
</dbReference>
<dbReference type="RefSeq" id="XP_024302959.1">
    <molecule id="Q8TDX6-1"/>
    <property type="nucleotide sequence ID" value="XM_024447191.2"/>
</dbReference>
<dbReference type="RefSeq" id="XP_024302960.1">
    <molecule id="Q8TDX6-1"/>
    <property type="nucleotide sequence ID" value="XM_024447192.2"/>
</dbReference>
<dbReference type="RefSeq" id="XP_024302961.1">
    <molecule id="Q8TDX6-1"/>
    <property type="nucleotide sequence ID" value="XM_024447193.2"/>
</dbReference>
<dbReference type="RefSeq" id="XP_047277916.1">
    <molecule id="Q8TDX6-1"/>
    <property type="nucleotide sequence ID" value="XM_047421960.1"/>
</dbReference>
<dbReference type="RefSeq" id="XP_047277917.1">
    <molecule id="Q8TDX6-1"/>
    <property type="nucleotide sequence ID" value="XM_047421961.1"/>
</dbReference>
<dbReference type="RefSeq" id="XP_047277918.1">
    <molecule id="Q8TDX6-1"/>
    <property type="nucleotide sequence ID" value="XM_047421962.1"/>
</dbReference>
<dbReference type="RefSeq" id="XP_047277919.1">
    <molecule id="Q8TDX6-1"/>
    <property type="nucleotide sequence ID" value="XM_047421963.1"/>
</dbReference>
<dbReference type="RefSeq" id="XP_047277920.1">
    <molecule id="Q8TDX6-1"/>
    <property type="nucleotide sequence ID" value="XM_047421964.1"/>
</dbReference>
<dbReference type="RefSeq" id="XP_047277921.1">
    <molecule id="Q8TDX6-1"/>
    <property type="nucleotide sequence ID" value="XM_047421965.1"/>
</dbReference>
<dbReference type="RefSeq" id="XP_047277922.1">
    <molecule id="Q8TDX6-1"/>
    <property type="nucleotide sequence ID" value="XM_047421966.1"/>
</dbReference>
<dbReference type="RefSeq" id="XP_047277923.1">
    <molecule id="Q8TDX6-1"/>
    <property type="nucleotide sequence ID" value="XM_047421967.1"/>
</dbReference>
<dbReference type="RefSeq" id="XP_047277924.1">
    <molecule id="Q8TDX6-1"/>
    <property type="nucleotide sequence ID" value="XM_047421968.1"/>
</dbReference>
<dbReference type="RefSeq" id="XP_047277925.1">
    <molecule id="Q8TDX6-1"/>
    <property type="nucleotide sequence ID" value="XM_047421969.1"/>
</dbReference>
<dbReference type="RefSeq" id="XP_047277926.1">
    <molecule id="Q8TDX6-1"/>
    <property type="nucleotide sequence ID" value="XM_047421970.1"/>
</dbReference>
<dbReference type="RefSeq" id="XP_047277927.1">
    <molecule id="Q8TDX6-1"/>
    <property type="nucleotide sequence ID" value="XM_047421971.1"/>
</dbReference>
<dbReference type="RefSeq" id="XP_047277928.1">
    <molecule id="Q8TDX6-1"/>
    <property type="nucleotide sequence ID" value="XM_047421972.1"/>
</dbReference>
<dbReference type="RefSeq" id="XP_047277929.1">
    <molecule id="Q8TDX6-1"/>
    <property type="nucleotide sequence ID" value="XM_047421973.1"/>
</dbReference>
<dbReference type="RefSeq" id="XP_047277930.1">
    <molecule id="Q8TDX6-1"/>
    <property type="nucleotide sequence ID" value="XM_047421974.1"/>
</dbReference>
<dbReference type="RefSeq" id="XP_047277931.1">
    <molecule id="Q8TDX6-1"/>
    <property type="nucleotide sequence ID" value="XM_047421975.1"/>
</dbReference>
<dbReference type="RefSeq" id="XP_047277932.1">
    <molecule id="Q8TDX6-1"/>
    <property type="nucleotide sequence ID" value="XM_047421976.1"/>
</dbReference>
<dbReference type="RefSeq" id="XP_047277933.1">
    <molecule id="Q8TDX6-1"/>
    <property type="nucleotide sequence ID" value="XM_047421977.1"/>
</dbReference>
<dbReference type="RefSeq" id="XP_047277934.1">
    <molecule id="Q8TDX6-1"/>
    <property type="nucleotide sequence ID" value="XM_047421978.1"/>
</dbReference>
<dbReference type="RefSeq" id="XP_047277935.1">
    <molecule id="Q8TDX6-1"/>
    <property type="nucleotide sequence ID" value="XM_047421979.1"/>
</dbReference>
<dbReference type="RefSeq" id="XP_054216777.1">
    <molecule id="Q8TDX6-1"/>
    <property type="nucleotide sequence ID" value="XM_054360802.1"/>
</dbReference>
<dbReference type="RefSeq" id="XP_054216778.1">
    <molecule id="Q8TDX6-1"/>
    <property type="nucleotide sequence ID" value="XM_054360803.1"/>
</dbReference>
<dbReference type="RefSeq" id="XP_054216779.1">
    <molecule id="Q8TDX6-1"/>
    <property type="nucleotide sequence ID" value="XM_054360804.1"/>
</dbReference>
<dbReference type="RefSeq" id="XP_054216780.1">
    <molecule id="Q8TDX6-1"/>
    <property type="nucleotide sequence ID" value="XM_054360805.1"/>
</dbReference>
<dbReference type="RefSeq" id="XP_054216781.1">
    <molecule id="Q8TDX6-1"/>
    <property type="nucleotide sequence ID" value="XM_054360806.1"/>
</dbReference>
<dbReference type="RefSeq" id="XP_054216782.1">
    <molecule id="Q8TDX6-1"/>
    <property type="nucleotide sequence ID" value="XM_054360807.1"/>
</dbReference>
<dbReference type="RefSeq" id="XP_054216783.1">
    <molecule id="Q8TDX6-1"/>
    <property type="nucleotide sequence ID" value="XM_054360808.1"/>
</dbReference>
<dbReference type="RefSeq" id="XP_054216784.1">
    <molecule id="Q8TDX6-1"/>
    <property type="nucleotide sequence ID" value="XM_054360809.1"/>
</dbReference>
<dbReference type="RefSeq" id="XP_054216785.1">
    <molecule id="Q8TDX6-1"/>
    <property type="nucleotide sequence ID" value="XM_054360810.1"/>
</dbReference>
<dbReference type="RefSeq" id="XP_054216786.1">
    <molecule id="Q8TDX6-1"/>
    <property type="nucleotide sequence ID" value="XM_054360811.1"/>
</dbReference>
<dbReference type="RefSeq" id="XP_054216787.1">
    <molecule id="Q8TDX6-1"/>
    <property type="nucleotide sequence ID" value="XM_054360812.1"/>
</dbReference>
<dbReference type="RefSeq" id="XP_054216788.1">
    <molecule id="Q8TDX6-1"/>
    <property type="nucleotide sequence ID" value="XM_054360813.1"/>
</dbReference>
<dbReference type="RefSeq" id="XP_054216789.1">
    <molecule id="Q8TDX6-1"/>
    <property type="nucleotide sequence ID" value="XM_054360814.1"/>
</dbReference>
<dbReference type="RefSeq" id="XP_054216790.1">
    <molecule id="Q8TDX6-1"/>
    <property type="nucleotide sequence ID" value="XM_054360815.1"/>
</dbReference>
<dbReference type="RefSeq" id="XP_054216791.1">
    <molecule id="Q8TDX6-1"/>
    <property type="nucleotide sequence ID" value="XM_054360816.1"/>
</dbReference>
<dbReference type="RefSeq" id="XP_054216792.1">
    <molecule id="Q8TDX6-1"/>
    <property type="nucleotide sequence ID" value="XM_054360817.1"/>
</dbReference>
<dbReference type="RefSeq" id="XP_054216793.1">
    <molecule id="Q8TDX6-1"/>
    <property type="nucleotide sequence ID" value="XM_054360818.1"/>
</dbReference>
<dbReference type="RefSeq" id="XP_054216794.1">
    <molecule id="Q8TDX6-1"/>
    <property type="nucleotide sequence ID" value="XM_054360819.1"/>
</dbReference>
<dbReference type="RefSeq" id="XP_054216795.1">
    <molecule id="Q8TDX6-1"/>
    <property type="nucleotide sequence ID" value="XM_054360820.1"/>
</dbReference>
<dbReference type="RefSeq" id="XP_054216796.1">
    <molecule id="Q8TDX6-1"/>
    <property type="nucleotide sequence ID" value="XM_054360821.1"/>
</dbReference>
<dbReference type="RefSeq" id="XP_054216797.1">
    <molecule id="Q8TDX6-1"/>
    <property type="nucleotide sequence ID" value="XM_054360822.1"/>
</dbReference>
<dbReference type="RefSeq" id="XP_054216798.1">
    <molecule id="Q8TDX6-1"/>
    <property type="nucleotide sequence ID" value="XM_054360823.1"/>
</dbReference>
<dbReference type="RefSeq" id="XP_054216799.1">
    <molecule id="Q8TDX6-1"/>
    <property type="nucleotide sequence ID" value="XM_054360824.1"/>
</dbReference>
<dbReference type="RefSeq" id="XP_054216800.1">
    <molecule id="Q8TDX6-1"/>
    <property type="nucleotide sequence ID" value="XM_054360825.1"/>
</dbReference>
<dbReference type="RefSeq" id="XP_054216801.1">
    <molecule id="Q8TDX6-1"/>
    <property type="nucleotide sequence ID" value="XM_054360826.1"/>
</dbReference>
<dbReference type="RefSeq" id="XP_054216802.1">
    <molecule id="Q8TDX6-1"/>
    <property type="nucleotide sequence ID" value="XM_054360827.1"/>
</dbReference>
<dbReference type="RefSeq" id="XP_054216803.1">
    <molecule id="Q8TDX6-1"/>
    <property type="nucleotide sequence ID" value="XM_054360828.1"/>
</dbReference>
<dbReference type="RefSeq" id="XP_054216804.1">
    <molecule id="Q8TDX6-1"/>
    <property type="nucleotide sequence ID" value="XM_054360829.1"/>
</dbReference>
<dbReference type="RefSeq" id="XP_054216805.1">
    <molecule id="Q8TDX6-1"/>
    <property type="nucleotide sequence ID" value="XM_054360830.1"/>
</dbReference>
<dbReference type="RefSeq" id="XP_054216806.1">
    <molecule id="Q8TDX6-1"/>
    <property type="nucleotide sequence ID" value="XM_054360831.1"/>
</dbReference>
<dbReference type="RefSeq" id="XP_054216807.1">
    <molecule id="Q8TDX6-1"/>
    <property type="nucleotide sequence ID" value="XM_054360832.1"/>
</dbReference>
<dbReference type="SMR" id="Q8TDX6"/>
<dbReference type="BioGRID" id="120904">
    <property type="interactions" value="67"/>
</dbReference>
<dbReference type="FunCoup" id="Q8TDX6">
    <property type="interactions" value="533"/>
</dbReference>
<dbReference type="IntAct" id="Q8TDX6">
    <property type="interactions" value="58"/>
</dbReference>
<dbReference type="STRING" id="9606.ENSP00000411816"/>
<dbReference type="BindingDB" id="Q8TDX6"/>
<dbReference type="ChEMBL" id="CHEMBL2040705"/>
<dbReference type="CAZy" id="GT7">
    <property type="family name" value="Glycosyltransferase Family 7"/>
</dbReference>
<dbReference type="GlyCosmos" id="Q8TDX6">
    <property type="glycosylation" value="3 sites, 1 glycan"/>
</dbReference>
<dbReference type="GlyGen" id="Q8TDX6">
    <property type="glycosylation" value="5 sites, 2 N-linked glycans (2 sites), 2 O-linked glycans (3 sites)"/>
</dbReference>
<dbReference type="iPTMnet" id="Q8TDX6"/>
<dbReference type="PhosphoSitePlus" id="Q8TDX6"/>
<dbReference type="BioMuta" id="CSGALNACT1"/>
<dbReference type="DMDM" id="308153425"/>
<dbReference type="jPOST" id="Q8TDX6"/>
<dbReference type="MassIVE" id="Q8TDX6"/>
<dbReference type="PaxDb" id="9606-ENSP00000411816"/>
<dbReference type="PeptideAtlas" id="Q8TDX6"/>
<dbReference type="ProteomicsDB" id="74361">
    <molecule id="Q8TDX6-1"/>
</dbReference>
<dbReference type="ProteomicsDB" id="74362">
    <molecule id="Q8TDX6-2"/>
</dbReference>
<dbReference type="ProteomicsDB" id="74363">
    <molecule id="Q8TDX6-3"/>
</dbReference>
<dbReference type="Antibodypedia" id="22388">
    <property type="antibodies" value="209 antibodies from 26 providers"/>
</dbReference>
<dbReference type="DNASU" id="55790"/>
<dbReference type="Ensembl" id="ENST00000332246.10">
    <molecule id="Q8TDX6-1"/>
    <property type="protein sequence ID" value="ENSP00000330805.6"/>
    <property type="gene ID" value="ENSG00000147408.16"/>
</dbReference>
<dbReference type="Ensembl" id="ENST00000397998.7">
    <molecule id="Q8TDX6-3"/>
    <property type="protein sequence ID" value="ENSP00000381084.3"/>
    <property type="gene ID" value="ENSG00000147408.16"/>
</dbReference>
<dbReference type="Ensembl" id="ENST00000454498.6">
    <molecule id="Q8TDX6-1"/>
    <property type="protein sequence ID" value="ENSP00000411816.2"/>
    <property type="gene ID" value="ENSG00000147408.16"/>
</dbReference>
<dbReference type="Ensembl" id="ENST00000519222.5">
    <molecule id="Q8TDX6-3"/>
    <property type="protein sequence ID" value="ENSP00000428216.1"/>
    <property type="gene ID" value="ENSG00000147408.16"/>
</dbReference>
<dbReference type="Ensembl" id="ENST00000522854.5">
    <molecule id="Q8TDX6-1"/>
    <property type="protein sequence ID" value="ENSP00000429809.1"/>
    <property type="gene ID" value="ENSG00000147408.16"/>
</dbReference>
<dbReference type="Ensembl" id="ENST00000692225.2">
    <molecule id="Q8TDX6-1"/>
    <property type="protein sequence ID" value="ENSP00000509853.1"/>
    <property type="gene ID" value="ENSG00000147408.16"/>
</dbReference>
<dbReference type="Ensembl" id="ENST00000695892.1">
    <molecule id="Q8TDX6-1"/>
    <property type="protein sequence ID" value="ENSP00000512242.1"/>
    <property type="gene ID" value="ENSG00000147408.16"/>
</dbReference>
<dbReference type="Ensembl" id="ENST00000695893.1">
    <molecule id="Q8TDX6-1"/>
    <property type="protein sequence ID" value="ENSP00000512243.1"/>
    <property type="gene ID" value="ENSG00000147408.16"/>
</dbReference>
<dbReference type="Ensembl" id="ENST00000695894.1">
    <molecule id="Q8TDX6-1"/>
    <property type="protein sequence ID" value="ENSP00000512244.1"/>
    <property type="gene ID" value="ENSG00000147408.16"/>
</dbReference>
<dbReference type="Ensembl" id="ENST00000695895.1">
    <molecule id="Q8TDX6-1"/>
    <property type="protein sequence ID" value="ENSP00000512245.1"/>
    <property type="gene ID" value="ENSG00000147408.16"/>
</dbReference>
<dbReference type="Ensembl" id="ENST00000695896.1">
    <molecule id="Q8TDX6-1"/>
    <property type="protein sequence ID" value="ENSP00000512246.1"/>
    <property type="gene ID" value="ENSG00000147408.16"/>
</dbReference>
<dbReference type="Ensembl" id="ENST00000695897.1">
    <molecule id="Q8TDX6-1"/>
    <property type="protein sequence ID" value="ENSP00000512247.1"/>
    <property type="gene ID" value="ENSG00000147408.16"/>
</dbReference>
<dbReference type="Ensembl" id="ENST00000695898.1">
    <molecule id="Q8TDX6-1"/>
    <property type="protein sequence ID" value="ENSP00000512248.1"/>
    <property type="gene ID" value="ENSG00000147408.16"/>
</dbReference>
<dbReference type="Ensembl" id="ENST00000695899.1">
    <molecule id="Q8TDX6-3"/>
    <property type="protein sequence ID" value="ENSP00000512249.1"/>
    <property type="gene ID" value="ENSG00000147408.16"/>
</dbReference>
<dbReference type="GeneID" id="55790"/>
<dbReference type="KEGG" id="hsa:55790"/>
<dbReference type="MANE-Select" id="ENST00000692225.2">
    <property type="protein sequence ID" value="ENSP00000509853.1"/>
    <property type="RefSeq nucleotide sequence ID" value="NM_001354483.2"/>
    <property type="RefSeq protein sequence ID" value="NP_001341412.1"/>
</dbReference>
<dbReference type="UCSC" id="uc003wzg.4">
    <molecule id="Q8TDX6-1"/>
    <property type="organism name" value="human"/>
</dbReference>
<dbReference type="AGR" id="HGNC:24290"/>
<dbReference type="CTD" id="55790"/>
<dbReference type="DisGeNET" id="55790"/>
<dbReference type="GeneCards" id="CSGALNACT1"/>
<dbReference type="HGNC" id="HGNC:24290">
    <property type="gene designation" value="CSGALNACT1"/>
</dbReference>
<dbReference type="HPA" id="ENSG00000147408">
    <property type="expression patterns" value="Tissue enhanced (thyroid)"/>
</dbReference>
<dbReference type="MalaCards" id="CSGALNACT1"/>
<dbReference type="MIM" id="616615">
    <property type="type" value="gene"/>
</dbReference>
<dbReference type="MIM" id="618870">
    <property type="type" value="phenotype"/>
</dbReference>
<dbReference type="neXtProt" id="NX_Q8TDX6"/>
<dbReference type="OpenTargets" id="ENSG00000147408"/>
<dbReference type="Orphanet" id="1425">
    <property type="disease" value="Desbuquois syndrome"/>
</dbReference>
<dbReference type="PharmGKB" id="PA162382829"/>
<dbReference type="VEuPathDB" id="HostDB:ENSG00000147408"/>
<dbReference type="eggNOG" id="KOG3588">
    <property type="taxonomic scope" value="Eukaryota"/>
</dbReference>
<dbReference type="GeneTree" id="ENSGT01050000244968"/>
<dbReference type="HOGENOM" id="CLU_025958_0_1_1"/>
<dbReference type="InParanoid" id="Q8TDX6"/>
<dbReference type="OMA" id="IVVYFGE"/>
<dbReference type="OrthoDB" id="431432at2759"/>
<dbReference type="PAN-GO" id="Q8TDX6">
    <property type="GO annotations" value="2 GO annotations based on evolutionary models"/>
</dbReference>
<dbReference type="PhylomeDB" id="Q8TDX6"/>
<dbReference type="TreeFam" id="TF318303"/>
<dbReference type="BioCyc" id="MetaCyc:HS07428-MONOMER"/>
<dbReference type="BRENDA" id="2.4.1.174">
    <property type="organism ID" value="2681"/>
</dbReference>
<dbReference type="BRENDA" id="2.4.1.175">
    <property type="organism ID" value="2681"/>
</dbReference>
<dbReference type="PathwayCommons" id="Q8TDX6"/>
<dbReference type="Reactome" id="R-HSA-2022870">
    <property type="pathway name" value="Chondroitin sulfate biosynthesis"/>
</dbReference>
<dbReference type="SignaLink" id="Q8TDX6"/>
<dbReference type="BioGRID-ORCS" id="55790">
    <property type="hits" value="14 hits in 1150 CRISPR screens"/>
</dbReference>
<dbReference type="ChiTaRS" id="CSGALNACT1">
    <property type="organism name" value="human"/>
</dbReference>
<dbReference type="GeneWiki" id="ChGn"/>
<dbReference type="GenomeRNAi" id="55790"/>
<dbReference type="Pharos" id="Q8TDX6">
    <property type="development level" value="Tbio"/>
</dbReference>
<dbReference type="PRO" id="PR:Q8TDX6"/>
<dbReference type="Proteomes" id="UP000005640">
    <property type="component" value="Chromosome 8"/>
</dbReference>
<dbReference type="RNAct" id="Q8TDX6">
    <property type="molecule type" value="protein"/>
</dbReference>
<dbReference type="Bgee" id="ENSG00000147408">
    <property type="expression patterns" value="Expressed in cartilage tissue and 199 other cell types or tissues"/>
</dbReference>
<dbReference type="ExpressionAtlas" id="Q8TDX6">
    <property type="expression patterns" value="baseline and differential"/>
</dbReference>
<dbReference type="GO" id="GO:0032580">
    <property type="term" value="C:Golgi cisterna membrane"/>
    <property type="evidence" value="ECO:0007669"/>
    <property type="project" value="UniProtKB-SubCell"/>
</dbReference>
<dbReference type="GO" id="GO:0000139">
    <property type="term" value="C:Golgi membrane"/>
    <property type="evidence" value="ECO:0000304"/>
    <property type="project" value="Reactome"/>
</dbReference>
<dbReference type="GO" id="GO:0008376">
    <property type="term" value="F:acetylgalactosaminyltransferase activity"/>
    <property type="evidence" value="ECO:0000314"/>
    <property type="project" value="UniProtKB"/>
</dbReference>
<dbReference type="GO" id="GO:0047238">
    <property type="term" value="F:glucuronosyl-N-acetylgalactosaminyl-proteoglycan 4-beta-N-acetylgalactosaminyltransferase activity"/>
    <property type="evidence" value="ECO:0000314"/>
    <property type="project" value="UniProtKB"/>
</dbReference>
<dbReference type="GO" id="GO:0015020">
    <property type="term" value="F:glucuronosyltransferase activity"/>
    <property type="evidence" value="ECO:0000314"/>
    <property type="project" value="UniProtKB"/>
</dbReference>
<dbReference type="GO" id="GO:0047237">
    <property type="term" value="F:glucuronylgalactosylproteoglycan 4-beta-N-acetylgalactosaminyltransferase activity"/>
    <property type="evidence" value="ECO:0000314"/>
    <property type="project" value="UniProtKB"/>
</dbReference>
<dbReference type="GO" id="GO:0046872">
    <property type="term" value="F:metal ion binding"/>
    <property type="evidence" value="ECO:0000303"/>
    <property type="project" value="UniProtKB"/>
</dbReference>
<dbReference type="GO" id="GO:0008955">
    <property type="term" value="F:peptidoglycan glycosyltransferase activity"/>
    <property type="evidence" value="ECO:0000314"/>
    <property type="project" value="UniProtKB"/>
</dbReference>
<dbReference type="GO" id="GO:0051216">
    <property type="term" value="P:cartilage development"/>
    <property type="evidence" value="ECO:0007669"/>
    <property type="project" value="Ensembl"/>
</dbReference>
<dbReference type="GO" id="GO:0050650">
    <property type="term" value="P:chondroitin sulfate proteoglycan biosynthetic process"/>
    <property type="evidence" value="ECO:0000314"/>
    <property type="project" value="UniProtKB"/>
</dbReference>
<dbReference type="GO" id="GO:0050651">
    <property type="term" value="P:dermatan sulfate proteoglycan biosynthetic process"/>
    <property type="evidence" value="ECO:0000250"/>
    <property type="project" value="UniProtKB"/>
</dbReference>
<dbReference type="GO" id="GO:0001958">
    <property type="term" value="P:endochondral ossification"/>
    <property type="evidence" value="ECO:0007669"/>
    <property type="project" value="Ensembl"/>
</dbReference>
<dbReference type="GO" id="GO:0030198">
    <property type="term" value="P:extracellular matrix organization"/>
    <property type="evidence" value="ECO:0007669"/>
    <property type="project" value="Ensembl"/>
</dbReference>
<dbReference type="GO" id="GO:0015012">
    <property type="term" value="P:heparan sulfate proteoglycan biosynthetic process"/>
    <property type="evidence" value="ECO:0000303"/>
    <property type="project" value="UniProtKB"/>
</dbReference>
<dbReference type="GO" id="GO:0030210">
    <property type="term" value="P:heparin proteoglycan biosynthetic process"/>
    <property type="evidence" value="ECO:0000303"/>
    <property type="project" value="UniProtKB"/>
</dbReference>
<dbReference type="GO" id="GO:0030166">
    <property type="term" value="P:proteoglycan biosynthetic process"/>
    <property type="evidence" value="ECO:0000250"/>
    <property type="project" value="UniProtKB"/>
</dbReference>
<dbReference type="GO" id="GO:0046398">
    <property type="term" value="P:UDP-glucuronate metabolic process"/>
    <property type="evidence" value="ECO:0000314"/>
    <property type="project" value="UniProtKB"/>
</dbReference>
<dbReference type="GO" id="GO:0019276">
    <property type="term" value="P:UDP-N-acetylgalactosamine metabolic process"/>
    <property type="evidence" value="ECO:0000314"/>
    <property type="project" value="UniProtKB"/>
</dbReference>
<dbReference type="FunFam" id="3.90.550.10:FF:000059">
    <property type="entry name" value="Hexosyltransferase"/>
    <property type="match status" value="1"/>
</dbReference>
<dbReference type="Gene3D" id="3.90.550.10">
    <property type="entry name" value="Spore Coat Polysaccharide Biosynthesis Protein SpsA, Chain A"/>
    <property type="match status" value="1"/>
</dbReference>
<dbReference type="InterPro" id="IPR008428">
    <property type="entry name" value="Chond_GalNAc"/>
</dbReference>
<dbReference type="InterPro" id="IPR051227">
    <property type="entry name" value="CS_glycosyltransferase"/>
</dbReference>
<dbReference type="InterPro" id="IPR029044">
    <property type="entry name" value="Nucleotide-diphossugar_trans"/>
</dbReference>
<dbReference type="PANTHER" id="PTHR12369:SF19">
    <property type="entry name" value="CHONDROITIN SULFATE N-ACETYLGALACTOSAMINYLTRANSFERASE 1"/>
    <property type="match status" value="1"/>
</dbReference>
<dbReference type="PANTHER" id="PTHR12369">
    <property type="entry name" value="CHONDROITIN SYNTHASE"/>
    <property type="match status" value="1"/>
</dbReference>
<dbReference type="Pfam" id="PF05679">
    <property type="entry name" value="CHGN"/>
    <property type="match status" value="1"/>
</dbReference>
<dbReference type="SUPFAM" id="SSF53448">
    <property type="entry name" value="Nucleotide-diphospho-sugar transferases"/>
    <property type="match status" value="1"/>
</dbReference>
<reference key="1">
    <citation type="journal article" date="2002" name="J. Biol. Chem.">
        <title>Molecular cloning and expression of human chondroitin N-acetylgalactosaminyltransferase: key enzyme for chain initiation and elongation of chondroitin/dermatan sulfate on the protein linkage region tetrasaccharide shared by heparin/heparan sulfate.</title>
        <authorList>
            <person name="Uyama T."/>
            <person name="Kitagawa H."/>
            <person name="Tamura J."/>
            <person name="Sugahara K."/>
        </authorList>
    </citation>
    <scope>NUCLEOTIDE SEQUENCE [MRNA] (ISOFORM 1)</scope>
    <scope>FUNCTION</scope>
    <scope>GLYCOSYLATION</scope>
    <scope>SUBCELLULAR LOCATION</scope>
    <scope>TISSUE SPECIFICITY</scope>
    <scope>VARIANT ASN-193</scope>
    <source>
        <tissue>Melanoma</tissue>
    </source>
</reference>
<reference key="2">
    <citation type="journal article" date="2002" name="J. Biol. Chem.">
        <title>Enzymatic synthesis of chondroitin with a novel chondroitin sulfate N-acetylgalactosaminyltransferase that transfers N-acetylgalactosamine to glucuronic acid in initiation and elongation of chondroitin sulfate synthesis.</title>
        <authorList>
            <person name="Gotoh M."/>
            <person name="Sato T."/>
            <person name="Akashima T."/>
            <person name="Iwasaki H."/>
            <person name="Kameyama A."/>
            <person name="Mochizuki H."/>
            <person name="Yada T."/>
            <person name="Inaba N."/>
            <person name="Zhang Y."/>
            <person name="Kikuchi N."/>
            <person name="Kwon Y.-D."/>
            <person name="Togayachi A."/>
            <person name="Kudo T."/>
            <person name="Nishihara S."/>
            <person name="Watanabe H."/>
            <person name="Kimata K."/>
            <person name="Narimatsu H."/>
        </authorList>
    </citation>
    <scope>NUCLEOTIDE SEQUENCE [MRNA] (ISOFORM 1)</scope>
    <scope>FUNCTION</scope>
    <scope>TISSUE SPECIFICITY</scope>
    <scope>VARIANT ASN-193</scope>
</reference>
<reference key="3">
    <citation type="journal article" date="2003" name="Genome Res.">
        <title>The secreted protein discovery initiative (SPDI), a large-scale effort to identify novel human secreted and transmembrane proteins: a bioinformatics assessment.</title>
        <authorList>
            <person name="Clark H.F."/>
            <person name="Gurney A.L."/>
            <person name="Abaya E."/>
            <person name="Baker K."/>
            <person name="Baldwin D.T."/>
            <person name="Brush J."/>
            <person name="Chen J."/>
            <person name="Chow B."/>
            <person name="Chui C."/>
            <person name="Crowley C."/>
            <person name="Currell B."/>
            <person name="Deuel B."/>
            <person name="Dowd P."/>
            <person name="Eaton D."/>
            <person name="Foster J.S."/>
            <person name="Grimaldi C."/>
            <person name="Gu Q."/>
            <person name="Hass P.E."/>
            <person name="Heldens S."/>
            <person name="Huang A."/>
            <person name="Kim H.S."/>
            <person name="Klimowski L."/>
            <person name="Jin Y."/>
            <person name="Johnson S."/>
            <person name="Lee J."/>
            <person name="Lewis L."/>
            <person name="Liao D."/>
            <person name="Mark M.R."/>
            <person name="Robbie E."/>
            <person name="Sanchez C."/>
            <person name="Schoenfeld J."/>
            <person name="Seshagiri S."/>
            <person name="Simmons L."/>
            <person name="Singh J."/>
            <person name="Smith V."/>
            <person name="Stinson J."/>
            <person name="Vagts A."/>
            <person name="Vandlen R.L."/>
            <person name="Watanabe C."/>
            <person name="Wieand D."/>
            <person name="Woods K."/>
            <person name="Xie M.-H."/>
            <person name="Yansura D.G."/>
            <person name="Yi S."/>
            <person name="Yu G."/>
            <person name="Yuan J."/>
            <person name="Zhang M."/>
            <person name="Zhang Z."/>
            <person name="Goddard A.D."/>
            <person name="Wood W.I."/>
            <person name="Godowski P.J."/>
            <person name="Gray A.M."/>
        </authorList>
    </citation>
    <scope>NUCLEOTIDE SEQUENCE [LARGE SCALE MRNA] (ISOFORM 1)</scope>
    <scope>VARIANT ASN-193</scope>
</reference>
<reference key="4">
    <citation type="journal article" date="2004" name="Nat. Genet.">
        <title>Complete sequencing and characterization of 21,243 full-length human cDNAs.</title>
        <authorList>
            <person name="Ota T."/>
            <person name="Suzuki Y."/>
            <person name="Nishikawa T."/>
            <person name="Otsuki T."/>
            <person name="Sugiyama T."/>
            <person name="Irie R."/>
            <person name="Wakamatsu A."/>
            <person name="Hayashi K."/>
            <person name="Sato H."/>
            <person name="Nagai K."/>
            <person name="Kimura K."/>
            <person name="Makita H."/>
            <person name="Sekine M."/>
            <person name="Obayashi M."/>
            <person name="Nishi T."/>
            <person name="Shibahara T."/>
            <person name="Tanaka T."/>
            <person name="Ishii S."/>
            <person name="Yamamoto J."/>
            <person name="Saito K."/>
            <person name="Kawai Y."/>
            <person name="Isono Y."/>
            <person name="Nakamura Y."/>
            <person name="Nagahari K."/>
            <person name="Murakami K."/>
            <person name="Yasuda T."/>
            <person name="Iwayanagi T."/>
            <person name="Wagatsuma M."/>
            <person name="Shiratori A."/>
            <person name="Sudo H."/>
            <person name="Hosoiri T."/>
            <person name="Kaku Y."/>
            <person name="Kodaira H."/>
            <person name="Kondo H."/>
            <person name="Sugawara M."/>
            <person name="Takahashi M."/>
            <person name="Kanda K."/>
            <person name="Yokoi T."/>
            <person name="Furuya T."/>
            <person name="Kikkawa E."/>
            <person name="Omura Y."/>
            <person name="Abe K."/>
            <person name="Kamihara K."/>
            <person name="Katsuta N."/>
            <person name="Sato K."/>
            <person name="Tanikawa M."/>
            <person name="Yamazaki M."/>
            <person name="Ninomiya K."/>
            <person name="Ishibashi T."/>
            <person name="Yamashita H."/>
            <person name="Murakawa K."/>
            <person name="Fujimori K."/>
            <person name="Tanai H."/>
            <person name="Kimata M."/>
            <person name="Watanabe M."/>
            <person name="Hiraoka S."/>
            <person name="Chiba Y."/>
            <person name="Ishida S."/>
            <person name="Ono Y."/>
            <person name="Takiguchi S."/>
            <person name="Watanabe S."/>
            <person name="Yosida M."/>
            <person name="Hotuta T."/>
            <person name="Kusano J."/>
            <person name="Kanehori K."/>
            <person name="Takahashi-Fujii A."/>
            <person name="Hara H."/>
            <person name="Tanase T.-O."/>
            <person name="Nomura Y."/>
            <person name="Togiya S."/>
            <person name="Komai F."/>
            <person name="Hara R."/>
            <person name="Takeuchi K."/>
            <person name="Arita M."/>
            <person name="Imose N."/>
            <person name="Musashino K."/>
            <person name="Yuuki H."/>
            <person name="Oshima A."/>
            <person name="Sasaki N."/>
            <person name="Aotsuka S."/>
            <person name="Yoshikawa Y."/>
            <person name="Matsunawa H."/>
            <person name="Ichihara T."/>
            <person name="Shiohata N."/>
            <person name="Sano S."/>
            <person name="Moriya S."/>
            <person name="Momiyama H."/>
            <person name="Satoh N."/>
            <person name="Takami S."/>
            <person name="Terashima Y."/>
            <person name="Suzuki O."/>
            <person name="Nakagawa S."/>
            <person name="Senoh A."/>
            <person name="Mizoguchi H."/>
            <person name="Goto Y."/>
            <person name="Shimizu F."/>
            <person name="Wakebe H."/>
            <person name="Hishigaki H."/>
            <person name="Watanabe T."/>
            <person name="Sugiyama A."/>
            <person name="Takemoto M."/>
            <person name="Kawakami B."/>
            <person name="Yamazaki M."/>
            <person name="Watanabe K."/>
            <person name="Kumagai A."/>
            <person name="Itakura S."/>
            <person name="Fukuzumi Y."/>
            <person name="Fujimori Y."/>
            <person name="Komiyama M."/>
            <person name="Tashiro H."/>
            <person name="Tanigami A."/>
            <person name="Fujiwara T."/>
            <person name="Ono T."/>
            <person name="Yamada K."/>
            <person name="Fujii Y."/>
            <person name="Ozaki K."/>
            <person name="Hirao M."/>
            <person name="Ohmori Y."/>
            <person name="Kawabata A."/>
            <person name="Hikiji T."/>
            <person name="Kobatake N."/>
            <person name="Inagaki H."/>
            <person name="Ikema Y."/>
            <person name="Okamoto S."/>
            <person name="Okitani R."/>
            <person name="Kawakami T."/>
            <person name="Noguchi S."/>
            <person name="Itoh T."/>
            <person name="Shigeta K."/>
            <person name="Senba T."/>
            <person name="Matsumura K."/>
            <person name="Nakajima Y."/>
            <person name="Mizuno T."/>
            <person name="Morinaga M."/>
            <person name="Sasaki M."/>
            <person name="Togashi T."/>
            <person name="Oyama M."/>
            <person name="Hata H."/>
            <person name="Watanabe M."/>
            <person name="Komatsu T."/>
            <person name="Mizushima-Sugano J."/>
            <person name="Satoh T."/>
            <person name="Shirai Y."/>
            <person name="Takahashi Y."/>
            <person name="Nakagawa K."/>
            <person name="Okumura K."/>
            <person name="Nagase T."/>
            <person name="Nomura N."/>
            <person name="Kikuchi H."/>
            <person name="Masuho Y."/>
            <person name="Yamashita R."/>
            <person name="Nakai K."/>
            <person name="Yada T."/>
            <person name="Nakamura Y."/>
            <person name="Ohara O."/>
            <person name="Isogai T."/>
            <person name="Sugano S."/>
        </authorList>
    </citation>
    <scope>NUCLEOTIDE SEQUENCE [LARGE SCALE MRNA] (ISOFORMS 1 AND 2)</scope>
    <source>
        <tissue>Placenta</tissue>
        <tissue>Thalamus</tissue>
    </source>
</reference>
<reference key="5">
    <citation type="journal article" date="2006" name="Nature">
        <title>DNA sequence and analysis of human chromosome 8.</title>
        <authorList>
            <person name="Nusbaum C."/>
            <person name="Mikkelsen T.S."/>
            <person name="Zody M.C."/>
            <person name="Asakawa S."/>
            <person name="Taudien S."/>
            <person name="Garber M."/>
            <person name="Kodira C.D."/>
            <person name="Schueler M.G."/>
            <person name="Shimizu A."/>
            <person name="Whittaker C.A."/>
            <person name="Chang J.L."/>
            <person name="Cuomo C.A."/>
            <person name="Dewar K."/>
            <person name="FitzGerald M.G."/>
            <person name="Yang X."/>
            <person name="Allen N.R."/>
            <person name="Anderson S."/>
            <person name="Asakawa T."/>
            <person name="Blechschmidt K."/>
            <person name="Bloom T."/>
            <person name="Borowsky M.L."/>
            <person name="Butler J."/>
            <person name="Cook A."/>
            <person name="Corum B."/>
            <person name="DeArellano K."/>
            <person name="DeCaprio D."/>
            <person name="Dooley K.T."/>
            <person name="Dorris L. III"/>
            <person name="Engels R."/>
            <person name="Gloeckner G."/>
            <person name="Hafez N."/>
            <person name="Hagopian D.S."/>
            <person name="Hall J.L."/>
            <person name="Ishikawa S.K."/>
            <person name="Jaffe D.B."/>
            <person name="Kamat A."/>
            <person name="Kudoh J."/>
            <person name="Lehmann R."/>
            <person name="Lokitsang T."/>
            <person name="Macdonald P."/>
            <person name="Major J.E."/>
            <person name="Matthews C.D."/>
            <person name="Mauceli E."/>
            <person name="Menzel U."/>
            <person name="Mihalev A.H."/>
            <person name="Minoshima S."/>
            <person name="Murayama Y."/>
            <person name="Naylor J.W."/>
            <person name="Nicol R."/>
            <person name="Nguyen C."/>
            <person name="O'Leary S.B."/>
            <person name="O'Neill K."/>
            <person name="Parker S.C.J."/>
            <person name="Polley A."/>
            <person name="Raymond C.K."/>
            <person name="Reichwald K."/>
            <person name="Rodriguez J."/>
            <person name="Sasaki T."/>
            <person name="Schilhabel M."/>
            <person name="Siddiqui R."/>
            <person name="Smith C.L."/>
            <person name="Sneddon T.P."/>
            <person name="Talamas J.A."/>
            <person name="Tenzin P."/>
            <person name="Topham K."/>
            <person name="Venkataraman V."/>
            <person name="Wen G."/>
            <person name="Yamazaki S."/>
            <person name="Young S.K."/>
            <person name="Zeng Q."/>
            <person name="Zimmer A.R."/>
            <person name="Rosenthal A."/>
            <person name="Birren B.W."/>
            <person name="Platzer M."/>
            <person name="Shimizu N."/>
            <person name="Lander E.S."/>
        </authorList>
    </citation>
    <scope>NUCLEOTIDE SEQUENCE [LARGE SCALE GENOMIC DNA]</scope>
</reference>
<reference key="6">
    <citation type="journal article" date="2004" name="Genome Res.">
        <title>The status, quality, and expansion of the NIH full-length cDNA project: the Mammalian Gene Collection (MGC).</title>
        <authorList>
            <consortium name="The MGC Project Team"/>
        </authorList>
    </citation>
    <scope>NUCLEOTIDE SEQUENCE [LARGE SCALE MRNA] (ISOFORM 3)</scope>
    <scope>VARIANT ASN-193</scope>
    <source>
        <tissue>Placenta</tissue>
    </source>
</reference>
<reference key="7">
    <citation type="journal article" date="2007" name="BMC Genomics">
        <title>The full-ORF clone resource of the German cDNA consortium.</title>
        <authorList>
            <person name="Bechtel S."/>
            <person name="Rosenfelder H."/>
            <person name="Duda A."/>
            <person name="Schmidt C.P."/>
            <person name="Ernst U."/>
            <person name="Wellenreuther R."/>
            <person name="Mehrle A."/>
            <person name="Schuster C."/>
            <person name="Bahr A."/>
            <person name="Bloecker H."/>
            <person name="Heubner D."/>
            <person name="Hoerlein A."/>
            <person name="Michel G."/>
            <person name="Wedler H."/>
            <person name="Koehrer K."/>
            <person name="Ottenwaelder B."/>
            <person name="Poustka A."/>
            <person name="Wiemann S."/>
            <person name="Schupp I."/>
        </authorList>
    </citation>
    <scope>NUCLEOTIDE SEQUENCE [LARGE SCALE MRNA] OF 381-532</scope>
    <scope>VARIANT ASN-193</scope>
    <source>
        <tissue>Melanoma</tissue>
    </source>
</reference>
<reference key="8">
    <citation type="journal article" date="2003" name="J. Biol. Chem.">
        <title>Differential roles of two N-acetylgalactosaminyltransferases, CSGalNAcT-1, and a novel enzyme, CSGalNAcT-2. Initiation and elongation in synthesis of chondroitin sulfate.</title>
        <authorList>
            <person name="Sato T."/>
            <person name="Gotoh M."/>
            <person name="Kiyohara K."/>
            <person name="Akashima T."/>
            <person name="Iwasaki H."/>
            <person name="Kameyama A."/>
            <person name="Mochizuki H."/>
            <person name="Yada T."/>
            <person name="Inaba N."/>
            <person name="Togayachi A."/>
            <person name="Kudo T."/>
            <person name="Asada M."/>
            <person name="Watanabe H."/>
            <person name="Imamura T."/>
            <person name="Kimata K."/>
            <person name="Narimatsu H."/>
        </authorList>
    </citation>
    <scope>FUNCTION</scope>
    <scope>TISSUE SPECIFICITY</scope>
</reference>
<reference key="9">
    <citation type="journal article" date="2007" name="J. Biol. Chem.">
        <title>Chondroitin sulfate N-acetylgalactosaminyltransferase-1 plays a critical role in chondroitin sulfate synthesis in cartilage.</title>
        <authorList>
            <person name="Sakai K."/>
            <person name="Kimata K."/>
            <person name="Sato T."/>
            <person name="Gotoh M."/>
            <person name="Narimatsu H."/>
            <person name="Shinomiya K."/>
            <person name="Watanabe H."/>
        </authorList>
    </citation>
    <scope>FUNCTION</scope>
</reference>
<reference key="10">
    <citation type="journal article" date="2011" name="J. Hum. Genet.">
        <title>Chondroitin beta-1,4-N-acetylgalactosaminyltransferase-1 missense mutations are associated with neuropathies.</title>
        <authorList>
            <person name="Saigoh K."/>
            <person name="Izumikawa T."/>
            <person name="Koike T."/>
            <person name="Shimizu J."/>
            <person name="Kitagawa H."/>
            <person name="Kusunoki S."/>
        </authorList>
    </citation>
    <scope>VARIANTS ARG-234 AND ARG-509</scope>
    <scope>CHARACTERIZATION OF VARIANTS ARG-234 AND ARG-509</scope>
    <scope>FUNCTION</scope>
    <scope>CATALYTIC ACTIVITY</scope>
</reference>
<reference key="11">
    <citation type="journal article" date="2017" name="Hum. Mutat.">
        <title>Chondroitin sulfate N-acetylgalactosaminyltransferase-1 (CSGalNAcT-1) deficiency results in a mild skeletal dysplasia and joint laxity.</title>
        <authorList>
            <person name="Vodopiutz J."/>
            <person name="Mizumoto S."/>
            <person name="Lausch E."/>
            <person name="Rossi A."/>
            <person name="Unger S."/>
            <person name="Janocha N."/>
            <person name="Costantini R."/>
            <person name="Seidl R."/>
            <person name="Greber-Platzer S."/>
            <person name="Yamada S."/>
            <person name="Mueller T."/>
            <person name="Jilma B."/>
            <person name="Ganger R."/>
            <person name="Superti-Furga A."/>
            <person name="Ikegawa S."/>
            <person name="Sugahara K."/>
            <person name="Janecke A.R."/>
        </authorList>
    </citation>
    <scope>INVOLVEMENT IN SDJLABA</scope>
    <scope>VARIANT SDJLABA ARG-384</scope>
    <scope>CHARACTERIZATION OF VARIANT SDJLAB AARG-384</scope>
    <scope>FUNCTION</scope>
    <scope>CATALYTIC ACTIVITY</scope>
</reference>
<reference key="12">
    <citation type="journal article" date="2019" name="Bone">
        <title>Biallelic CSGALNACT1-mutations cause a mild skeletal dysplasia.</title>
        <authorList>
            <person name="Meyer R."/>
            <person name="Schacht S."/>
            <person name="Buschmann L."/>
            <person name="Begemann M."/>
            <person name="Kraft F."/>
            <person name="Haag N."/>
            <person name="Kochs A."/>
            <person name="Schulze A."/>
            <person name="Kurth I."/>
            <person name="Elbracht M."/>
        </authorList>
    </citation>
    <scope>INVOLVEMENT IN SDJLABA</scope>
</reference>
<reference key="13">
    <citation type="journal article" date="2020" name="Hum. Mutat.">
        <title>CSGALNACT1-congenital disorder of glycosylation: A mild skeletal dysplasia with advanced bone age.</title>
        <authorList>
            <person name="Mizumoto S."/>
            <person name="Janecke A.R."/>
            <person name="Sadeghpour A."/>
            <person name="Povysil G."/>
            <person name="McDonald M.T."/>
            <person name="Unger S."/>
            <person name="Greber-Platzer S."/>
            <person name="Deak K.L."/>
            <person name="Katsanis N."/>
            <person name="Superti-Furga A."/>
            <person name="Sugahara K."/>
            <person name="Davis E.E."/>
            <person name="Yamada S."/>
            <person name="Vodopiutz J."/>
        </authorList>
    </citation>
    <scope>INVOLVEMENT IN SDJLABA</scope>
    <scope>VARIANTS SDJLABA SER-264 AND TYR-432</scope>
    <scope>CHARACTERIZATION OF VARIANTS SDJLABA SER-264 AND TYR-432</scope>
    <scope>FUNCTION</scope>
</reference>
<keyword id="KW-0025">Alternative splicing</keyword>
<keyword id="KW-0175">Coiled coil</keyword>
<keyword id="KW-0225">Disease variant</keyword>
<keyword id="KW-0242">Dwarfism</keyword>
<keyword id="KW-0325">Glycoprotein</keyword>
<keyword id="KW-0333">Golgi apparatus</keyword>
<keyword id="KW-0472">Membrane</keyword>
<keyword id="KW-0479">Metal-binding</keyword>
<keyword id="KW-1267">Proteomics identification</keyword>
<keyword id="KW-1185">Reference proteome</keyword>
<keyword id="KW-0735">Signal-anchor</keyword>
<keyword id="KW-0808">Transferase</keyword>
<keyword id="KW-0812">Transmembrane</keyword>
<keyword id="KW-1133">Transmembrane helix</keyword>
<proteinExistence type="evidence at protein level"/>
<gene>
    <name evidence="18" type="primary">CSGALNACT1</name>
    <name type="synonym">CHGN</name>
    <name type="synonym">GALNACT1</name>
    <name type="ORF">UNQ656/PRO1287</name>
</gene>
<organism>
    <name type="scientific">Homo sapiens</name>
    <name type="common">Human</name>
    <dbReference type="NCBI Taxonomy" id="9606"/>
    <lineage>
        <taxon>Eukaryota</taxon>
        <taxon>Metazoa</taxon>
        <taxon>Chordata</taxon>
        <taxon>Craniata</taxon>
        <taxon>Vertebrata</taxon>
        <taxon>Euteleostomi</taxon>
        <taxon>Mammalia</taxon>
        <taxon>Eutheria</taxon>
        <taxon>Euarchontoglires</taxon>
        <taxon>Primates</taxon>
        <taxon>Haplorrhini</taxon>
        <taxon>Catarrhini</taxon>
        <taxon>Hominidae</taxon>
        <taxon>Homo</taxon>
    </lineage>
</organism>
<evidence type="ECO:0000250" key="1">
    <source>
        <dbReference type="UniProtKB" id="Q8BJQ9"/>
    </source>
</evidence>
<evidence type="ECO:0000255" key="2"/>
<evidence type="ECO:0000269" key="3">
    <source>
    </source>
</evidence>
<evidence type="ECO:0000269" key="4">
    <source>
    </source>
</evidence>
<evidence type="ECO:0000269" key="5">
    <source>
    </source>
</evidence>
<evidence type="ECO:0000269" key="6">
    <source>
    </source>
</evidence>
<evidence type="ECO:0000269" key="7">
    <source>
    </source>
</evidence>
<evidence type="ECO:0000269" key="8">
    <source>
    </source>
</evidence>
<evidence type="ECO:0000269" key="9">
    <source>
    </source>
</evidence>
<evidence type="ECO:0000269" key="10">
    <source>
    </source>
</evidence>
<evidence type="ECO:0000269" key="11">
    <source>
    </source>
</evidence>
<evidence type="ECO:0000269" key="12">
    <source>
    </source>
</evidence>
<evidence type="ECO:0000269" key="13">
    <source>
    </source>
</evidence>
<evidence type="ECO:0000303" key="14">
    <source>
    </source>
</evidence>
<evidence type="ECO:0000303" key="15">
    <source>
    </source>
</evidence>
<evidence type="ECO:0000305" key="16"/>
<evidence type="ECO:0000305" key="17">
    <source>
    </source>
</evidence>
<evidence type="ECO:0000312" key="18">
    <source>
        <dbReference type="HGNC" id="HGNC:24290"/>
    </source>
</evidence>
<name>CGAT1_HUMAN</name>
<accession>Q8TDX6</accession>
<accession>B2RBE4</accession>
<accession>Q6P9G6</accession>
<accession>Q8IUF9</accession>
<accession>Q9NSQ7</accession>
<accession>Q9NUM9</accession>
<comment type="function">
    <text evidence="1 3 4 5 8 10 11 13">Transfers 1,4-N-acetylgalactosamine (GalNAc) from UDP-GalNAc to the non-reducing end of glucuronic acid (GlcUA). Required for addition of the first GalNAc to the core tetrasaccharide linker and for elongation of chondroitin chains. Important role in chondroitin chain biosynthesis in cartilage formation and subsequent endochondral ossification (PubMed:11788602, PubMed:12163485, PubMed:12446672, PubMed:17145758, PubMed:31705726). Moreover, is involved in the metabolism of aggrecan (By similarity).</text>
</comment>
<comment type="catalytic activity">
    <reaction evidence="10 11">
        <text>3-O-(beta-D-GlcA-(1-&gt;3)-beta-D-Gal-(1-&gt;3)-beta-D-Gal-(1-&gt;4)-beta-D-Xyl)-L-seryl-[protein] + UDP-N-acetyl-alpha-D-galactosamine = 3-O-(beta-D-GalNAc-(1-&gt;4)-beta-D-GlcA-(1-&gt;3)-beta-D-Gal-(1-&gt;3)-beta-D-Gal-(1-&gt;4)-beta-D-Xyl)-L-seryl-[protein] + UDP + H(+)</text>
        <dbReference type="Rhea" id="RHEA:23464"/>
        <dbReference type="Rhea" id="RHEA-COMP:12573"/>
        <dbReference type="Rhea" id="RHEA-COMP:12575"/>
        <dbReference type="ChEBI" id="CHEBI:15378"/>
        <dbReference type="ChEBI" id="CHEBI:58223"/>
        <dbReference type="ChEBI" id="CHEBI:67138"/>
        <dbReference type="ChEBI" id="CHEBI:132093"/>
        <dbReference type="ChEBI" id="CHEBI:132105"/>
        <dbReference type="EC" id="2.4.1.174"/>
    </reaction>
</comment>
<comment type="interaction">
    <interactant intactId="EBI-12917736">
        <id>Q8TDX6-3</id>
    </interactant>
    <interactant intactId="EBI-10819434">
        <id>Q9NPE6</id>
        <label>SPAG4</label>
    </interactant>
    <organismsDiffer>false</organismsDiffer>
    <experiments>3</experiments>
</comment>
<comment type="subcellular location">
    <subcellularLocation>
        <location evidence="17">Golgi apparatus</location>
        <location evidence="17">Golgi stack membrane</location>
        <topology evidence="17">Single-pass type II membrane protein</topology>
    </subcellularLocation>
</comment>
<comment type="alternative products">
    <event type="alternative splicing"/>
    <isoform>
        <id>Q8TDX6-1</id>
        <name>1</name>
        <sequence type="displayed"/>
    </isoform>
    <isoform>
        <id>Q8TDX6-2</id>
        <name>2</name>
        <sequence type="described" ref="VSP_012726 VSP_012727"/>
    </isoform>
    <isoform>
        <id>Q8TDX6-3</id>
        <name>3</name>
        <sequence type="described" ref="VSP_012728"/>
    </isoform>
</comment>
<comment type="tissue specificity">
    <text evidence="3 4 5">Ubiquitous, with the highest levels in placenta, thyroid, bladder, prostate and adrenal gland. Detected at low levels in the other tissues examined.</text>
</comment>
<comment type="PTM">
    <text evidence="3">N-glycosylated.</text>
</comment>
<comment type="disease" evidence="11 12 13">
    <disease id="DI-05830">
        <name>Skeletal dysplasia, mild, with joint laxity and advanced bone age</name>
        <acronym>SDJLABA</acronym>
        <description>An autosomal recessive disorder characterized by skeletal dysplasia, short stature, short long bones, advanced bone age, joint laxity, and facial dysmorphism.</description>
        <dbReference type="MIM" id="618870"/>
    </disease>
    <text>The disease is caused by variants affecting the gene represented in this entry.</text>
</comment>
<comment type="similarity">
    <text evidence="16">Belongs to the chondroitin N-acetylgalactosaminyltransferase family.</text>
</comment>
<comment type="online information" name="Functional Glycomics Gateway - GTase">
    <link uri="http://www.functionalglycomics.org/glycomics/molecule/jsp/glycoEnzyme/viewGlycoEnzyme.jsp?gbpId=gt_hum_477"/>
    <text>Chondroitin beta-1,4-N-acetylgalactosaminyltransferase 1</text>
</comment>